<organism>
    <name type="scientific">Bos taurus</name>
    <name type="common">Bovine</name>
    <dbReference type="NCBI Taxonomy" id="9913"/>
    <lineage>
        <taxon>Eukaryota</taxon>
        <taxon>Metazoa</taxon>
        <taxon>Chordata</taxon>
        <taxon>Craniata</taxon>
        <taxon>Vertebrata</taxon>
        <taxon>Euteleostomi</taxon>
        <taxon>Mammalia</taxon>
        <taxon>Eutheria</taxon>
        <taxon>Laurasiatheria</taxon>
        <taxon>Artiodactyla</taxon>
        <taxon>Ruminantia</taxon>
        <taxon>Pecora</taxon>
        <taxon>Bovidae</taxon>
        <taxon>Bovinae</taxon>
        <taxon>Bos</taxon>
    </lineage>
</organism>
<dbReference type="EC" id="3.6.5.5" evidence="2"/>
<dbReference type="EMBL" id="BC112710">
    <property type="protein sequence ID" value="AAI12711.1"/>
    <property type="molecule type" value="mRNA"/>
</dbReference>
<dbReference type="RefSeq" id="NP_001039959.1">
    <property type="nucleotide sequence ID" value="NM_001046494.2"/>
</dbReference>
<dbReference type="SMR" id="Q2KIA5"/>
<dbReference type="FunCoup" id="Q2KIA5">
    <property type="interactions" value="5018"/>
</dbReference>
<dbReference type="STRING" id="9913.ENSBTAP00000037777"/>
<dbReference type="GlyCosmos" id="Q2KIA5">
    <property type="glycosylation" value="2 sites, No reported glycans"/>
</dbReference>
<dbReference type="GlyGen" id="Q2KIA5">
    <property type="glycosylation" value="2 sites"/>
</dbReference>
<dbReference type="PaxDb" id="9913-ENSBTAP00000037777"/>
<dbReference type="PeptideAtlas" id="Q2KIA5"/>
<dbReference type="Ensembl" id="ENSBTAT00000037956.5">
    <property type="protein sequence ID" value="ENSBTAP00000037777.4"/>
    <property type="gene ID" value="ENSBTAG00000011395.7"/>
</dbReference>
<dbReference type="GeneID" id="540892"/>
<dbReference type="KEGG" id="bta:540892"/>
<dbReference type="CTD" id="10059"/>
<dbReference type="VEuPathDB" id="HostDB:ENSBTAG00000011395"/>
<dbReference type="VGNC" id="VGNC:28142">
    <property type="gene designation" value="DNM1L"/>
</dbReference>
<dbReference type="eggNOG" id="KOG0446">
    <property type="taxonomic scope" value="Eukaryota"/>
</dbReference>
<dbReference type="GeneTree" id="ENSGT00940000155504"/>
<dbReference type="HOGENOM" id="CLU_008964_5_0_1"/>
<dbReference type="InParanoid" id="Q2KIA5"/>
<dbReference type="OMA" id="KICHNCG"/>
<dbReference type="OrthoDB" id="5061070at2759"/>
<dbReference type="TreeFam" id="TF352031"/>
<dbReference type="Reactome" id="R-BTA-75153">
    <property type="pathway name" value="Apoptotic execution phase"/>
</dbReference>
<dbReference type="Proteomes" id="UP000009136">
    <property type="component" value="Chromosome 5"/>
</dbReference>
<dbReference type="Bgee" id="ENSBTAG00000011395">
    <property type="expression patterns" value="Expressed in occipital lobe and 105 other cell types or tissues"/>
</dbReference>
<dbReference type="GO" id="GO:0005903">
    <property type="term" value="C:brush border"/>
    <property type="evidence" value="ECO:0007669"/>
    <property type="project" value="Ensembl"/>
</dbReference>
<dbReference type="GO" id="GO:0005905">
    <property type="term" value="C:clathrin-coated pit"/>
    <property type="evidence" value="ECO:0007669"/>
    <property type="project" value="UniProtKB-SubCell"/>
</dbReference>
<dbReference type="GO" id="GO:0005737">
    <property type="term" value="C:cytoplasm"/>
    <property type="evidence" value="ECO:0000318"/>
    <property type="project" value="GO_Central"/>
</dbReference>
<dbReference type="GO" id="GO:0005829">
    <property type="term" value="C:cytosol"/>
    <property type="evidence" value="ECO:0000314"/>
    <property type="project" value="ParkinsonsUK-UCL"/>
</dbReference>
<dbReference type="GO" id="GO:0005783">
    <property type="term" value="C:endoplasmic reticulum"/>
    <property type="evidence" value="ECO:0007669"/>
    <property type="project" value="Ensembl"/>
</dbReference>
<dbReference type="GO" id="GO:0005794">
    <property type="term" value="C:Golgi apparatus"/>
    <property type="evidence" value="ECO:0007669"/>
    <property type="project" value="UniProtKB-SubCell"/>
</dbReference>
<dbReference type="GO" id="GO:0016020">
    <property type="term" value="C:membrane"/>
    <property type="evidence" value="ECO:0000318"/>
    <property type="project" value="GO_Central"/>
</dbReference>
<dbReference type="GO" id="GO:0005874">
    <property type="term" value="C:microtubule"/>
    <property type="evidence" value="ECO:0000318"/>
    <property type="project" value="GO_Central"/>
</dbReference>
<dbReference type="GO" id="GO:0005741">
    <property type="term" value="C:mitochondrial outer membrane"/>
    <property type="evidence" value="ECO:0000250"/>
    <property type="project" value="UniProtKB"/>
</dbReference>
<dbReference type="GO" id="GO:0005739">
    <property type="term" value="C:mitochondrion"/>
    <property type="evidence" value="ECO:0000314"/>
    <property type="project" value="ParkinsonsUK-UCL"/>
</dbReference>
<dbReference type="GO" id="GO:0099073">
    <property type="term" value="C:mitochondrion-derived vesicle"/>
    <property type="evidence" value="ECO:0007669"/>
    <property type="project" value="Ensembl"/>
</dbReference>
<dbReference type="GO" id="GO:0048471">
    <property type="term" value="C:perinuclear region of cytoplasm"/>
    <property type="evidence" value="ECO:0007669"/>
    <property type="project" value="Ensembl"/>
</dbReference>
<dbReference type="GO" id="GO:0005777">
    <property type="term" value="C:peroxisome"/>
    <property type="evidence" value="ECO:0000250"/>
    <property type="project" value="UniProtKB"/>
</dbReference>
<dbReference type="GO" id="GO:0032991">
    <property type="term" value="C:protein-containing complex"/>
    <property type="evidence" value="ECO:0007669"/>
    <property type="project" value="Ensembl"/>
</dbReference>
<dbReference type="GO" id="GO:0030672">
    <property type="term" value="C:synaptic vesicle membrane"/>
    <property type="evidence" value="ECO:0007669"/>
    <property type="project" value="UniProtKB-SubCell"/>
</dbReference>
<dbReference type="GO" id="GO:0005525">
    <property type="term" value="F:GTP binding"/>
    <property type="evidence" value="ECO:0007669"/>
    <property type="project" value="UniProtKB-KW"/>
</dbReference>
<dbReference type="GO" id="GO:0030742">
    <property type="term" value="F:GTP-dependent protein binding"/>
    <property type="evidence" value="ECO:0007669"/>
    <property type="project" value="Ensembl"/>
</dbReference>
<dbReference type="GO" id="GO:0003924">
    <property type="term" value="F:GTPase activity"/>
    <property type="evidence" value="ECO:0000250"/>
    <property type="project" value="UniProtKB"/>
</dbReference>
<dbReference type="GO" id="GO:0042802">
    <property type="term" value="F:identical protein binding"/>
    <property type="evidence" value="ECO:0000353"/>
    <property type="project" value="ParkinsonsUK-UCL"/>
</dbReference>
<dbReference type="GO" id="GO:0008289">
    <property type="term" value="F:lipid binding"/>
    <property type="evidence" value="ECO:0007669"/>
    <property type="project" value="UniProtKB-KW"/>
</dbReference>
<dbReference type="GO" id="GO:0008017">
    <property type="term" value="F:microtubule binding"/>
    <property type="evidence" value="ECO:0000318"/>
    <property type="project" value="GO_Central"/>
</dbReference>
<dbReference type="GO" id="GO:0042803">
    <property type="term" value="F:protein homodimerization activity"/>
    <property type="evidence" value="ECO:0000250"/>
    <property type="project" value="UniProtKB"/>
</dbReference>
<dbReference type="GO" id="GO:0031267">
    <property type="term" value="F:small GTPase binding"/>
    <property type="evidence" value="ECO:0007669"/>
    <property type="project" value="Ensembl"/>
</dbReference>
<dbReference type="GO" id="GO:0031625">
    <property type="term" value="F:ubiquitin protein ligase binding"/>
    <property type="evidence" value="ECO:0007669"/>
    <property type="project" value="Ensembl"/>
</dbReference>
<dbReference type="GO" id="GO:0006816">
    <property type="term" value="P:calcium ion transport"/>
    <property type="evidence" value="ECO:0007669"/>
    <property type="project" value="Ensembl"/>
</dbReference>
<dbReference type="GO" id="GO:0006897">
    <property type="term" value="P:endocytosis"/>
    <property type="evidence" value="ECO:0000318"/>
    <property type="project" value="GO_Central"/>
</dbReference>
<dbReference type="GO" id="GO:0060047">
    <property type="term" value="P:heart contraction"/>
    <property type="evidence" value="ECO:0007669"/>
    <property type="project" value="Ensembl"/>
</dbReference>
<dbReference type="GO" id="GO:0048312">
    <property type="term" value="P:intracellular distribution of mitochondria"/>
    <property type="evidence" value="ECO:0000318"/>
    <property type="project" value="GO_Central"/>
</dbReference>
<dbReference type="GO" id="GO:0000266">
    <property type="term" value="P:mitochondrial fission"/>
    <property type="evidence" value="ECO:0000250"/>
    <property type="project" value="UniProtKB"/>
</dbReference>
<dbReference type="GO" id="GO:0043653">
    <property type="term" value="P:mitochondrial fragmentation involved in apoptotic process"/>
    <property type="evidence" value="ECO:0000318"/>
    <property type="project" value="GO_Central"/>
</dbReference>
<dbReference type="GO" id="GO:0090149">
    <property type="term" value="P:mitochondrial membrane fission"/>
    <property type="evidence" value="ECO:0007669"/>
    <property type="project" value="Ensembl"/>
</dbReference>
<dbReference type="GO" id="GO:0160040">
    <property type="term" value="P:mitocytosis"/>
    <property type="evidence" value="ECO:0007669"/>
    <property type="project" value="Ensembl"/>
</dbReference>
<dbReference type="GO" id="GO:0016559">
    <property type="term" value="P:peroxisome fission"/>
    <property type="evidence" value="ECO:0000250"/>
    <property type="project" value="UniProtKB"/>
</dbReference>
<dbReference type="GO" id="GO:0090141">
    <property type="term" value="P:positive regulation of mitochondrial fission"/>
    <property type="evidence" value="ECO:0007669"/>
    <property type="project" value="Ensembl"/>
</dbReference>
<dbReference type="GO" id="GO:0090023">
    <property type="term" value="P:positive regulation of neutrophil chemotaxis"/>
    <property type="evidence" value="ECO:0007669"/>
    <property type="project" value="Ensembl"/>
</dbReference>
<dbReference type="GO" id="GO:0050714">
    <property type="term" value="P:positive regulation of protein secretion"/>
    <property type="evidence" value="ECO:0007669"/>
    <property type="project" value="Ensembl"/>
</dbReference>
<dbReference type="GO" id="GO:0051259">
    <property type="term" value="P:protein complex oligomerization"/>
    <property type="evidence" value="ECO:0000250"/>
    <property type="project" value="UniProtKB"/>
</dbReference>
<dbReference type="GO" id="GO:0070585">
    <property type="term" value="P:protein localization to mitochondrion"/>
    <property type="evidence" value="ECO:0007669"/>
    <property type="project" value="Ensembl"/>
</dbReference>
<dbReference type="GO" id="GO:1903578">
    <property type="term" value="P:regulation of ATP metabolic process"/>
    <property type="evidence" value="ECO:0007669"/>
    <property type="project" value="Ensembl"/>
</dbReference>
<dbReference type="GO" id="GO:0010468">
    <property type="term" value="P:regulation of gene expression"/>
    <property type="evidence" value="ECO:0007669"/>
    <property type="project" value="Ensembl"/>
</dbReference>
<dbReference type="GO" id="GO:1901524">
    <property type="term" value="P:regulation of mitophagy"/>
    <property type="evidence" value="ECO:0007669"/>
    <property type="project" value="Ensembl"/>
</dbReference>
<dbReference type="GO" id="GO:1900063">
    <property type="term" value="P:regulation of peroxisome organization"/>
    <property type="evidence" value="ECO:0007669"/>
    <property type="project" value="Ensembl"/>
</dbReference>
<dbReference type="GO" id="GO:0048511">
    <property type="term" value="P:rhythmic process"/>
    <property type="evidence" value="ECO:0007669"/>
    <property type="project" value="UniProtKB-KW"/>
</dbReference>
<dbReference type="CDD" id="cd08771">
    <property type="entry name" value="DLP_1"/>
    <property type="match status" value="1"/>
</dbReference>
<dbReference type="FunFam" id="1.20.120.1240:FF:000034">
    <property type="entry name" value="Dynamin 1 like"/>
    <property type="match status" value="1"/>
</dbReference>
<dbReference type="FunFam" id="1.20.120.1240:FF:000006">
    <property type="entry name" value="Dynamin-1-like protein isoform 1"/>
    <property type="match status" value="1"/>
</dbReference>
<dbReference type="FunFam" id="3.40.50.300:FF:000172">
    <property type="entry name" value="Dynamin-1-like protein isoform 1"/>
    <property type="match status" value="1"/>
</dbReference>
<dbReference type="Gene3D" id="1.20.120.1240">
    <property type="entry name" value="Dynamin, middle domain"/>
    <property type="match status" value="2"/>
</dbReference>
<dbReference type="Gene3D" id="3.40.50.300">
    <property type="entry name" value="P-loop containing nucleotide triphosphate hydrolases"/>
    <property type="match status" value="1"/>
</dbReference>
<dbReference type="InterPro" id="IPR022812">
    <property type="entry name" value="Dynamin"/>
</dbReference>
<dbReference type="InterPro" id="IPR001401">
    <property type="entry name" value="Dynamin_GTPase"/>
</dbReference>
<dbReference type="InterPro" id="IPR019762">
    <property type="entry name" value="Dynamin_GTPase_CS"/>
</dbReference>
<dbReference type="InterPro" id="IPR045063">
    <property type="entry name" value="Dynamin_N"/>
</dbReference>
<dbReference type="InterPro" id="IPR000375">
    <property type="entry name" value="Dynamin_stalk"/>
</dbReference>
<dbReference type="InterPro" id="IPR030381">
    <property type="entry name" value="G_DYNAMIN_dom"/>
</dbReference>
<dbReference type="InterPro" id="IPR003130">
    <property type="entry name" value="GED"/>
</dbReference>
<dbReference type="InterPro" id="IPR020850">
    <property type="entry name" value="GED_dom"/>
</dbReference>
<dbReference type="InterPro" id="IPR027417">
    <property type="entry name" value="P-loop_NTPase"/>
</dbReference>
<dbReference type="PANTHER" id="PTHR11566">
    <property type="entry name" value="DYNAMIN"/>
    <property type="match status" value="1"/>
</dbReference>
<dbReference type="PANTHER" id="PTHR11566:SF39">
    <property type="entry name" value="DYNAMIN-1-LIKE PROTEIN"/>
    <property type="match status" value="1"/>
</dbReference>
<dbReference type="Pfam" id="PF01031">
    <property type="entry name" value="Dynamin_M"/>
    <property type="match status" value="1"/>
</dbReference>
<dbReference type="Pfam" id="PF00350">
    <property type="entry name" value="Dynamin_N"/>
    <property type="match status" value="1"/>
</dbReference>
<dbReference type="Pfam" id="PF02212">
    <property type="entry name" value="GED"/>
    <property type="match status" value="1"/>
</dbReference>
<dbReference type="PRINTS" id="PR00195">
    <property type="entry name" value="DYNAMIN"/>
</dbReference>
<dbReference type="SMART" id="SM00053">
    <property type="entry name" value="DYNc"/>
    <property type="match status" value="1"/>
</dbReference>
<dbReference type="SMART" id="SM00302">
    <property type="entry name" value="GED"/>
    <property type="match status" value="1"/>
</dbReference>
<dbReference type="SUPFAM" id="SSF52540">
    <property type="entry name" value="P-loop containing nucleoside triphosphate hydrolases"/>
    <property type="match status" value="1"/>
</dbReference>
<dbReference type="PROSITE" id="PS00410">
    <property type="entry name" value="G_DYNAMIN_1"/>
    <property type="match status" value="1"/>
</dbReference>
<dbReference type="PROSITE" id="PS51718">
    <property type="entry name" value="G_DYNAMIN_2"/>
    <property type="match status" value="1"/>
</dbReference>
<dbReference type="PROSITE" id="PS51388">
    <property type="entry name" value="GED"/>
    <property type="match status" value="1"/>
</dbReference>
<protein>
    <recommendedName>
        <fullName evidence="2">Dynamin-1-like protein</fullName>
        <ecNumber evidence="2">3.6.5.5</ecNumber>
    </recommendedName>
</protein>
<feature type="chain" id="PRO_0000284972" description="Dynamin-1-like protein">
    <location>
        <begin position="1"/>
        <end position="749"/>
    </location>
</feature>
<feature type="domain" description="Dynamin-type G" evidence="6">
    <location>
        <begin position="22"/>
        <end position="315"/>
    </location>
</feature>
<feature type="domain" description="GED" evidence="5">
    <location>
        <begin position="657"/>
        <end position="748"/>
    </location>
</feature>
<feature type="region of interest" description="G1 motif" evidence="6">
    <location>
        <begin position="32"/>
        <end position="39"/>
    </location>
</feature>
<feature type="region of interest" description="G2 motif" evidence="6">
    <location>
        <begin position="58"/>
        <end position="60"/>
    </location>
</feature>
<feature type="region of interest" description="Disordered" evidence="7">
    <location>
        <begin position="74"/>
        <end position="93"/>
    </location>
</feature>
<feature type="region of interest" description="G3 motif" evidence="6">
    <location>
        <begin position="159"/>
        <end position="162"/>
    </location>
</feature>
<feature type="region of interest" description="G4 motif" evidence="6">
    <location>
        <begin position="228"/>
        <end position="231"/>
    </location>
</feature>
<feature type="region of interest" description="G5 motif" evidence="6">
    <location>
        <begin position="258"/>
        <end position="261"/>
    </location>
</feature>
<feature type="region of interest" description="Middle domain" evidence="2">
    <location>
        <begin position="357"/>
        <end position="502"/>
    </location>
</feature>
<feature type="region of interest" description="Interaction with GSK3B" evidence="2">
    <location>
        <begin position="461"/>
        <end position="698"/>
    </location>
</feature>
<feature type="region of interest" description="B domain" evidence="2">
    <location>
        <begin position="515"/>
        <end position="582"/>
    </location>
</feature>
<feature type="region of interest" description="Disordered" evidence="7">
    <location>
        <begin position="536"/>
        <end position="604"/>
    </location>
</feature>
<feature type="region of interest" description="Important for homodimerization" evidence="2">
    <location>
        <begin position="667"/>
        <end position="681"/>
    </location>
</feature>
<feature type="compositionally biased region" description="Low complexity" evidence="7">
    <location>
        <begin position="550"/>
        <end position="567"/>
    </location>
</feature>
<feature type="compositionally biased region" description="Basic and acidic residues" evidence="7">
    <location>
        <begin position="568"/>
        <end position="581"/>
    </location>
</feature>
<feature type="binding site" evidence="2">
    <location>
        <begin position="32"/>
        <end position="40"/>
    </location>
    <ligand>
        <name>GTP</name>
        <dbReference type="ChEBI" id="CHEBI:37565"/>
    </ligand>
</feature>
<feature type="binding site" evidence="2">
    <location>
        <begin position="228"/>
        <end position="234"/>
    </location>
    <ligand>
        <name>GTP</name>
        <dbReference type="ChEBI" id="CHEBI:37565"/>
    </ligand>
</feature>
<feature type="binding site" evidence="2">
    <location>
        <begin position="259"/>
        <end position="262"/>
    </location>
    <ligand>
        <name>GTP</name>
        <dbReference type="ChEBI" id="CHEBI:37565"/>
    </ligand>
</feature>
<feature type="modified residue" description="N-acetylmethionine" evidence="2">
    <location>
        <position position="1"/>
    </location>
</feature>
<feature type="modified residue" description="Phosphoserine" evidence="2">
    <location>
        <position position="542"/>
    </location>
</feature>
<feature type="modified residue" description="Phosphoserine" evidence="2">
    <location>
        <position position="561"/>
    </location>
</feature>
<feature type="modified residue" description="N6-acetyllysine; alternate" evidence="4">
    <location>
        <position position="610"/>
    </location>
</feature>
<feature type="modified residue" description="Phosphoserine" evidence="2">
    <location>
        <position position="620"/>
    </location>
</feature>
<feature type="modified residue" description="Phosphoserine; by CDK1 and PINK1" evidence="2">
    <location>
        <position position="629"/>
    </location>
</feature>
<feature type="modified residue" description="Phosphoserine; by CAMK1 and PKA" evidence="2">
    <location>
        <position position="650"/>
    </location>
</feature>
<feature type="modified residue" description="S-nitrosocysteine" evidence="2">
    <location>
        <position position="657"/>
    </location>
</feature>
<feature type="glycosylation site" description="O-linked (GlcNAc) threonine" evidence="1">
    <location>
        <position position="598"/>
    </location>
</feature>
<feature type="glycosylation site" description="O-linked (GlcNAc) threonine" evidence="1">
    <location>
        <position position="599"/>
    </location>
</feature>
<feature type="cross-link" description="Glycyl lysine isopeptide (Lys-Gly) (interchain with G-Cter in SUMO)" evidence="1">
    <location>
        <position position="545"/>
    </location>
</feature>
<feature type="cross-link" description="Glycyl lysine isopeptide (Lys-Gly) (interchain with G-Cter in SUMO)" evidence="1">
    <location>
        <position position="548"/>
    </location>
</feature>
<feature type="cross-link" description="Glycyl lysine isopeptide (Lys-Gly) (interchain with G-Cter in SUMO)" evidence="1">
    <location>
        <position position="571"/>
    </location>
</feature>
<feature type="cross-link" description="Glycyl lysine isopeptide (Lys-Gly) (interchain with G-Cter in SUMO)" evidence="1">
    <location>
        <position position="581"/>
    </location>
</feature>
<feature type="cross-link" description="Glycyl lysine isopeptide (Lys-Gly) (interchain with G-Cter in SUMO)" evidence="1">
    <location>
        <position position="607"/>
    </location>
</feature>
<feature type="cross-link" description="Glycyl lysine isopeptide (Lys-Gly) (interchain with G-Cter in SUMO); alternate" evidence="1">
    <location>
        <position position="610"/>
    </location>
</feature>
<feature type="cross-link" description="Glycyl lysine isopeptide (Lys-Gly) (interchain with G-Cter in SUMO)" evidence="1">
    <location>
        <position position="619"/>
    </location>
</feature>
<feature type="cross-link" description="Glycyl lysine isopeptide (Lys-Gly) (interchain with G-Cter in SUMO)" evidence="1">
    <location>
        <position position="621"/>
    </location>
</feature>
<sequence length="749" mass="83352">MEALIPVINKLQDVFNTVGADIIQLPQIVVVGTQSSGKSSVLESLVGRDLLPRGTGIVTRRPLILQLVHVAPEDKRKTTGEENDPATWKNSRHLSKGVEAEEWGKFLHTKNKLYTDFDEIRQEIENETERISGNNKGVSPEPIHLKIFSPNVVNLTLVDLPGMTKVPVGDQPKDIELQIRELILRFISNPNSIILAVTAANTDMATSEALKISREVDPDGRRTLAVITKLDLMDAGTDAMDVLMGRVIPVKLGIIGVVNRSQLDINNKKSVTDSIRDEYAFLQKKYPSLANRNGTKYLARTLNRLLMHHIRDCLPELKTRINVLAAQYQSLLNSYGEPVDDKSATLLQLITKFATEYCNTIEGTAKYIETSELCGGARICYIFHETFGRTLESVDPLGGLNTIDILTAIRNATGPRPALFVPEVSFELLVKRQIKRLEEPSLRCVELVHEEMQRIIQHCSNYSTQELLRFPKLHDAIVEVVTCLLRKRLPVTNEMVHNLVAIELAYINTKHPDFADACGLMNNNIEEQRRNRLARELPSAVSRDKSSKVPSALAPASQEPSPAASAEADGKLIQESRRETKNAASGGGGVGDAVQEPTTGNWRGMLKTSKAEELLAEEKSKPIPIMPASPQKGHAVNLLDVPVPVARKLSAREQRDCEVIERLIKSYFLIVRKNIQDSVPKAVMHFLVNHVKDTLQSELVGQLYKSSLLDDLLTESEDMAQRRKEAADMLKALQGASQIIAEIRETHLW</sequence>
<proteinExistence type="evidence at transcript level"/>
<accession>Q2KIA5</accession>
<evidence type="ECO:0000250" key="1"/>
<evidence type="ECO:0000250" key="2">
    <source>
        <dbReference type="UniProtKB" id="O00429"/>
    </source>
</evidence>
<evidence type="ECO:0000250" key="3">
    <source>
        <dbReference type="UniProtKB" id="O35303"/>
    </source>
</evidence>
<evidence type="ECO:0000250" key="4">
    <source>
        <dbReference type="UniProtKB" id="Q8K1M6"/>
    </source>
</evidence>
<evidence type="ECO:0000255" key="5">
    <source>
        <dbReference type="PROSITE-ProRule" id="PRU00720"/>
    </source>
</evidence>
<evidence type="ECO:0000255" key="6">
    <source>
        <dbReference type="PROSITE-ProRule" id="PRU01055"/>
    </source>
</evidence>
<evidence type="ECO:0000256" key="7">
    <source>
        <dbReference type="SAM" id="MobiDB-lite"/>
    </source>
</evidence>
<reference key="1">
    <citation type="submission" date="2006-01" db="EMBL/GenBank/DDBJ databases">
        <authorList>
            <consortium name="NIH - Mammalian Gene Collection (MGC) project"/>
        </authorList>
    </citation>
    <scope>NUCLEOTIDE SEQUENCE [LARGE SCALE MRNA]</scope>
    <source>
        <strain>Hereford</strain>
        <tissue>Hypothalamus</tissue>
    </source>
</reference>
<comment type="function">
    <text evidence="2 4">Functions in mitochondrial and peroxisomal division. Mediates membrane fission through oligomerization into membrane-associated tubular structures that wrap around the scission site to constrict and sever the mitochondrial membrane through a GTP hydrolysis-dependent mechanism. The specific recruitment at scission sites is mediated by membrane receptors like MFF, MIEF1 and MIEF2 for mitochondrial membranes. While the recruitment by the membrane receptors is GTP-dependent, the following hydrolysis of GTP induces the dissociation from the receptors and allows DNM1L filaments to curl into closed rings that are probably sufficient to sever a double membrane. Acts downstream of PINK1 to promote mitochondrial fission in a PRKN-dependent manner. Plays an important role in mitochondrial fission during mitosis (By similarity). Through its function in mitochondrial division, ensures the survival of at least some types of postmitotic neurons, including Purkinje cells, by suppressing oxidative damage (By similarity). Required for normal brain development, including that of cerebellum (By similarity). Facilitates developmentally regulated apoptosis during neural tube formation. Required for a normal rate of cytochrome c release and caspase activation during apoptosis; this requirement may depend upon the cell type and the physiological apoptotic cues (By similarity). Required for formation of endocytic vesicles. Proposed to regulate synaptic vesicle membrane dynamics through association with BCL2L1 isoform Bcl-X(L) which stimulates its GTPase activity in synaptic vesicles; the function may require its recruitment by MFF to clathrin-containing vesicles. Required for programmed necrosis execution. Rhythmic control of its activity following phosphorylation at Ser-650 is essential for the circadian control of mitochondrial ATP production (By similarity).</text>
</comment>
<comment type="catalytic activity">
    <reaction evidence="2">
        <text>GTP + H2O = GDP + phosphate + H(+)</text>
        <dbReference type="Rhea" id="RHEA:19669"/>
        <dbReference type="ChEBI" id="CHEBI:15377"/>
        <dbReference type="ChEBI" id="CHEBI:15378"/>
        <dbReference type="ChEBI" id="CHEBI:37565"/>
        <dbReference type="ChEBI" id="CHEBI:43474"/>
        <dbReference type="ChEBI" id="CHEBI:58189"/>
        <dbReference type="EC" id="3.6.5.5"/>
    </reaction>
</comment>
<comment type="subunit">
    <text evidence="2 4">Homotetramer; dimerizes through the N-terminal GTP-middle region of one molecule binding to the GED domain of another DNM1L molecule. Oligomerizes in a GTP-dependent manner to form membrane-associated tubules with a spiral pattern. Interacts with GSK3B and MARCHF5. Interacts (via the GTPase and B domains) with UBE2I; the interaction promotes sumoylation of DNM1L, mainly in its B domain. Interacts with PPP3CA; the interaction dephosphorylates DNM1L and regulates its transition to mitochondria. Interacts with BCL2L1 isoform BCL-X(L) and CLTA; DNM1L and BCL2L1 isoform BCL-X(L) may form a complex in synaptic vesicles that also contains clathrin and MFF. Interacts with MFF; the interaction is inhinited by C11orf65/MFI. Interacts with FIS1. Interacts with MIEF2 and MIEF1; GTP-dependent, regulates GTP hydrolysis and DNM1L oligomerization. Interacts with PGAM5; this interaction leads to dephosphorylation at Ser-656 and activation of GTPase activity and eventually to mitochondria fragmentation. Interacts with RALBP1; during mitosis, recruits DNM1L to the mitochondrion and mediates its activation by the mitotic kinase cyclin B-CDK1 (By similarity).</text>
</comment>
<comment type="subcellular location">
    <subcellularLocation>
        <location evidence="4">Cytoplasm</location>
        <location evidence="4">Cytosol</location>
    </subcellularLocation>
    <subcellularLocation>
        <location evidence="2">Golgi apparatus</location>
    </subcellularLocation>
    <subcellularLocation>
        <location evidence="2">Endomembrane system</location>
        <topology evidence="4">Peripheral membrane protein</topology>
    </subcellularLocation>
    <subcellularLocation>
        <location evidence="4">Mitochondrion outer membrane</location>
        <topology evidence="4">Peripheral membrane protein</topology>
    </subcellularLocation>
    <subcellularLocation>
        <location evidence="3">Peroxisome</location>
    </subcellularLocation>
    <subcellularLocation>
        <location evidence="1">Membrane</location>
        <location evidence="1">Clathrin-coated pit</location>
    </subcellularLocation>
    <subcellularLocation>
        <location evidence="3">Cytoplasmic vesicle</location>
        <location evidence="3">Secretory vesicle</location>
        <location evidence="3">Synaptic vesicle membrane</location>
    </subcellularLocation>
    <text evidence="1 2 4">Mainly cytosolic. Recruited by RALA and RALBP1 to mitochondrion during mitosis (By similarity). Translocated to the mitochondrial membrane through O-GlcNAcylation and interaction with FIS1. Colocalized with MARCHF5 at mitochondrial membrane. Localizes to mitochondria at sites of division. Localizes to mitochondria following necrosis induction. Recruited to the mitochondrial outer membrane by interaction with MIEF1. Mitochondrial recruitment is inhibited by C11orf65/MFI (By similarity). Associated with peroxisomal membranes, partly recruited there by PEX11B. May also be associated with endoplasmic reticulum tubules and cytoplasmic vesicles and found to be perinuclear. In some cell types, localizes to the Golgi complex (By similarity). Binds to phospholipid membranes (By similarity).</text>
</comment>
<comment type="domain">
    <text evidence="2">The GED domain folds back to interact, in cis, with the GTP-binding domain and middle domain, and interacts, in trans, with the GED domains of other DNM1L molecules, and is thus critical for activating GTPase activity and for DNM1L dimerization.</text>
</comment>
<comment type="PTM">
    <text evidence="2">Phosphorylation/dephosphorylation events on two sites near the GED domain regulate mitochondrial fission. Phosphorylation on Ser-650 by CAMK1 and PKA inhibits the GTPase activity, leading to a defect in mitochondrial fission promoting mitochondrial elongation. Dephosphorylated on this site by PPP3CA which promotes mitochondrial fission. Phosphorylation on Ser-629 by CDK1 and PINK1 activates the GTPase activity and promotes mitochondrial fission. Phosphorylated in a circadian manner at Ser-650.</text>
</comment>
<comment type="PTM">
    <text evidence="1">Sumoylated on various lysine residues within the B domain, probably by MUL1. Sumoylation positively regulates mitochondrial fission. Desumoylated by SENP5 during G2/M transition of mitosis. Appears to be linked to its catalytic activity (By similarity).</text>
</comment>
<comment type="PTM">
    <text evidence="1">S-nitrosylation increases DNM1L dimerization, mitochondrial fission and causes neuronal damage.</text>
</comment>
<comment type="PTM">
    <text evidence="3">O-GlcNAcylation augments the level of the GTP-bound active form of DNM1L and induces translocation from the cytoplasm to mitochondria in cardiomyocytes. It also decreases phosphorylation at Ser-650 (By similarity).</text>
</comment>
<comment type="PTM">
    <text evidence="2">Ubiquitination by MARCHF5 affects mitochondrial morphology.</text>
</comment>
<comment type="similarity">
    <text evidence="6">Belongs to the TRAFAC class dynamin-like GTPase superfamily. Dynamin/Fzo/YdjA family.</text>
</comment>
<name>DNM1L_BOVIN</name>
<keyword id="KW-0007">Acetylation</keyword>
<keyword id="KW-0090">Biological rhythms</keyword>
<keyword id="KW-0168">Coated pit</keyword>
<keyword id="KW-0963">Cytoplasm</keyword>
<keyword id="KW-0968">Cytoplasmic vesicle</keyword>
<keyword id="KW-0254">Endocytosis</keyword>
<keyword id="KW-0325">Glycoprotein</keyword>
<keyword id="KW-0333">Golgi apparatus</keyword>
<keyword id="KW-0342">GTP-binding</keyword>
<keyword id="KW-0378">Hydrolase</keyword>
<keyword id="KW-1017">Isopeptide bond</keyword>
<keyword id="KW-0446">Lipid-binding</keyword>
<keyword id="KW-0472">Membrane</keyword>
<keyword id="KW-0496">Mitochondrion</keyword>
<keyword id="KW-1000">Mitochondrion outer membrane</keyword>
<keyword id="KW-1210">Necrosis</keyword>
<keyword id="KW-0547">Nucleotide-binding</keyword>
<keyword id="KW-0576">Peroxisome</keyword>
<keyword id="KW-0597">Phosphoprotein</keyword>
<keyword id="KW-1185">Reference proteome</keyword>
<keyword id="KW-0702">S-nitrosylation</keyword>
<keyword id="KW-0770">Synapse</keyword>
<keyword id="KW-0832">Ubl conjugation</keyword>
<gene>
    <name evidence="2" type="primary">DNM1L</name>
</gene>